<gene>
    <name type="primary">eepd1</name>
</gene>
<proteinExistence type="evidence at transcript level"/>
<sequence length="556" mass="62043">MGGNLGCHRSIPKDPSDLCQKSRKYSAACNFSNILVSQERLNINTATEEELMTLPGVTRQVAQNIVEYREYIGGFKKVEDLALVSGVGAAKLEQVKFEICVSSKGGSSQHSPNSLRKDTEYGQHLSAARLNLNTASASQLMNLRGLTQEMVEDIVQYRSQQGPLKSIEDLVKVDSISPSFLDKIRHQVYVQRSRPSSAHTNGGLHFMAKPHPSPTSISLHSEDLDFPPGGPTQFISTRPPVELFGGEREGKPVLRVATWNLQNCSLDKANNPGVREVVCMTLLENSIKLLAVQELSDKDALEKLCTELNQPSLPNIRKWKGMRGSWKCIISEKSLCGPSEKEEYFGFLWDVSAGIELKNVNLSENMQTNGNGKHMYLQPYIAHFKVGTCDLTLVNIHLSPPTVETVKHQNDTYKSAVFGQALQETLKNERDVIILGCFSLPADSSEFDVLRKEKFHCLLPLNTFTNISTKNPQGNKSLDNIWISKSLKKIFTGYSLVVREGLTNPWIPDNWSWGGVASEHCPVLAEFYMDRDCNKKEMATKANGMTVERNDTKHER</sequence>
<reference key="1">
    <citation type="submission" date="2004-06" db="EMBL/GenBank/DDBJ databases">
        <authorList>
            <consortium name="NIH - Xenopus Gene Collection (XGC) project"/>
        </authorList>
    </citation>
    <scope>NUCLEOTIDE SEQUENCE [LARGE SCALE MRNA]</scope>
    <source>
        <tissue>Brain</tissue>
    </source>
</reference>
<organism>
    <name type="scientific">Xenopus laevis</name>
    <name type="common">African clawed frog</name>
    <dbReference type="NCBI Taxonomy" id="8355"/>
    <lineage>
        <taxon>Eukaryota</taxon>
        <taxon>Metazoa</taxon>
        <taxon>Chordata</taxon>
        <taxon>Craniata</taxon>
        <taxon>Vertebrata</taxon>
        <taxon>Euteleostomi</taxon>
        <taxon>Amphibia</taxon>
        <taxon>Batrachia</taxon>
        <taxon>Anura</taxon>
        <taxon>Pipoidea</taxon>
        <taxon>Pipidae</taxon>
        <taxon>Xenopodinae</taxon>
        <taxon>Xenopus</taxon>
        <taxon>Xenopus</taxon>
    </lineage>
</organism>
<protein>
    <recommendedName>
        <fullName>Endonuclease/exonuclease/phosphatase family domain-containing protein 1</fullName>
    </recommendedName>
</protein>
<dbReference type="EMBL" id="BC072349">
    <property type="protein sequence ID" value="AAH72349.1"/>
    <property type="molecule type" value="mRNA"/>
</dbReference>
<dbReference type="RefSeq" id="NP_001085108.1">
    <property type="nucleotide sequence ID" value="NM_001091639.1"/>
</dbReference>
<dbReference type="SMR" id="Q6IND4"/>
<dbReference type="DNASU" id="432179"/>
<dbReference type="GeneID" id="432179"/>
<dbReference type="KEGG" id="xla:432179"/>
<dbReference type="AGR" id="Xenbase:XB-GENE-6255983"/>
<dbReference type="CTD" id="432179"/>
<dbReference type="Xenbase" id="XB-GENE-6255983">
    <property type="gene designation" value="eepd1.L"/>
</dbReference>
<dbReference type="OMA" id="HLVPANT"/>
<dbReference type="OrthoDB" id="6237065at2759"/>
<dbReference type="Proteomes" id="UP000186698">
    <property type="component" value="Chromosome 6L"/>
</dbReference>
<dbReference type="Bgee" id="432179">
    <property type="expression patterns" value="Expressed in muscle tissue and 18 other cell types or tissues"/>
</dbReference>
<dbReference type="GO" id="GO:0005886">
    <property type="term" value="C:plasma membrane"/>
    <property type="evidence" value="ECO:0000318"/>
    <property type="project" value="GO_Central"/>
</dbReference>
<dbReference type="GO" id="GO:0003824">
    <property type="term" value="F:catalytic activity"/>
    <property type="evidence" value="ECO:0007669"/>
    <property type="project" value="InterPro"/>
</dbReference>
<dbReference type="GO" id="GO:0003677">
    <property type="term" value="F:DNA binding"/>
    <property type="evidence" value="ECO:0007669"/>
    <property type="project" value="InterPro"/>
</dbReference>
<dbReference type="GO" id="GO:0006281">
    <property type="term" value="P:DNA repair"/>
    <property type="evidence" value="ECO:0007669"/>
    <property type="project" value="InterPro"/>
</dbReference>
<dbReference type="CDD" id="cd10283">
    <property type="entry name" value="MnuA_DNase1-like"/>
    <property type="match status" value="1"/>
</dbReference>
<dbReference type="Gene3D" id="1.10.150.280">
    <property type="entry name" value="AF1531-like domain"/>
    <property type="match status" value="1"/>
</dbReference>
<dbReference type="Gene3D" id="3.60.10.10">
    <property type="entry name" value="Endonuclease/exonuclease/phosphatase"/>
    <property type="match status" value="1"/>
</dbReference>
<dbReference type="Gene3D" id="1.10.150.320">
    <property type="entry name" value="Photosystem II 12 kDa extrinsic protein"/>
    <property type="match status" value="1"/>
</dbReference>
<dbReference type="InterPro" id="IPR004509">
    <property type="entry name" value="Competence_ComEA_HhH"/>
</dbReference>
<dbReference type="InterPro" id="IPR051675">
    <property type="entry name" value="Endo/Exo/Phosphatase_dom_1"/>
</dbReference>
<dbReference type="InterPro" id="IPR036691">
    <property type="entry name" value="Endo/exonu/phosph_ase_sf"/>
</dbReference>
<dbReference type="InterPro" id="IPR005135">
    <property type="entry name" value="Endo/exonuclease/phosphatase"/>
</dbReference>
<dbReference type="InterPro" id="IPR003583">
    <property type="entry name" value="Hlx-hairpin-Hlx_DNA-bd_motif"/>
</dbReference>
<dbReference type="InterPro" id="IPR010994">
    <property type="entry name" value="RuvA_2-like"/>
</dbReference>
<dbReference type="NCBIfam" id="TIGR00426">
    <property type="entry name" value="competence protein ComEA helix-hairpin-helix repeat region"/>
    <property type="match status" value="1"/>
</dbReference>
<dbReference type="PANTHER" id="PTHR21180">
    <property type="entry name" value="ENDONUCLEASE/EXONUCLEASE/PHOSPHATASE FAMILY DOMAIN-CONTAINING PROTEIN 1"/>
    <property type="match status" value="1"/>
</dbReference>
<dbReference type="PANTHER" id="PTHR21180:SF32">
    <property type="entry name" value="ENDONUCLEASE_EXONUCLEASE_PHOSPHATASE FAMILY DOMAIN-CONTAINING PROTEIN 1"/>
    <property type="match status" value="1"/>
</dbReference>
<dbReference type="Pfam" id="PF03372">
    <property type="entry name" value="Exo_endo_phos"/>
    <property type="match status" value="1"/>
</dbReference>
<dbReference type="Pfam" id="PF12836">
    <property type="entry name" value="HHH_3"/>
    <property type="match status" value="2"/>
</dbReference>
<dbReference type="SMART" id="SM00278">
    <property type="entry name" value="HhH1"/>
    <property type="match status" value="3"/>
</dbReference>
<dbReference type="SUPFAM" id="SSF56219">
    <property type="entry name" value="DNase I-like"/>
    <property type="match status" value="1"/>
</dbReference>
<dbReference type="SUPFAM" id="SSF47781">
    <property type="entry name" value="RuvA domain 2-like"/>
    <property type="match status" value="2"/>
</dbReference>
<name>EEPD1_XENLA</name>
<accession>Q6IND4</accession>
<keyword id="KW-1185">Reference proteome</keyword>
<feature type="chain" id="PRO_0000317265" description="Endonuclease/exonuclease/phosphatase family domain-containing protein 1">
    <location>
        <begin position="1"/>
        <end position="556"/>
    </location>
</feature>
<feature type="domain" description="HhH">
    <location>
        <begin position="39"/>
        <end position="68"/>
    </location>
</feature>